<gene>
    <name type="primary">Ccl9</name>
    <name type="synonym">Mrp2</name>
    <name type="synonym">Scya10</name>
    <name type="synonym">Scya9</name>
</gene>
<comment type="function">
    <text>Monokine with inflammatory, pyrogenic and chemokinetic properties. Circulates at high concentrations in the blood of healthy animals. Binding to a high-affinity receptor activates calcium release in neutrophils. It also inhibits colony formation of bone marrow myeloid immature progenitors.</text>
</comment>
<comment type="subcellular location">
    <subcellularLocation>
        <location>Secreted</location>
    </subcellularLocation>
</comment>
<comment type="tissue specificity">
    <text>Expressed mainly in the liver, lung, and the thymus, although some expression has been detected in a wide variety of tissues except brain.</text>
</comment>
<comment type="induction">
    <text>By interleukin-4; in the bone marrow macrophage.</text>
</comment>
<comment type="PTM">
    <text evidence="3">The N-terminal is proteolytically cleaved by proteases associated with inflammatory responses. The processed forms CCL9(29-101), CCL9(30-101) and CCL9(31-101) exhibit increase in CCR1-mediated signaling and chemotaxis assays in vitro.</text>
</comment>
<comment type="similarity">
    <text evidence="6">Belongs to the intercrine beta (chemokine CC) family.</text>
</comment>
<protein>
    <recommendedName>
        <fullName>C-C motif chemokine 9</fullName>
    </recommendedName>
    <alternativeName>
        <fullName>CCF18</fullName>
    </alternativeName>
    <alternativeName>
        <fullName>Macrophage inflammatory protein 1-gamma</fullName>
        <shortName evidence="5">MIP-1-gamma</shortName>
    </alternativeName>
    <alternativeName>
        <fullName evidence="4">Macrophage inflammatory protein-related protein 2</fullName>
        <shortName>MRP-2</shortName>
    </alternativeName>
    <alternativeName>
        <fullName>Small-inducible cytokine A9</fullName>
    </alternativeName>
    <component>
        <recommendedName>
            <fullName>CCL9(29-101)</fullName>
        </recommendedName>
    </component>
    <component>
        <recommendedName>
            <fullName>CCL9(30-101)</fullName>
        </recommendedName>
    </component>
    <component>
        <recommendedName>
            <fullName>CCL9(31-101)</fullName>
        </recommendedName>
    </component>
</protein>
<feature type="signal peptide" evidence="2">
    <location>
        <begin position="1"/>
        <end position="21"/>
    </location>
</feature>
<feature type="chain" id="PRO_0000005192" description="C-C motif chemokine 9">
    <location>
        <begin position="22"/>
        <end position="122"/>
    </location>
</feature>
<feature type="chain" id="PRO_0000041865" description="CCL9(29-101)" evidence="3">
    <location>
        <begin position="50"/>
        <end position="122"/>
    </location>
</feature>
<feature type="chain" id="PRO_0000041866" description="CCL9(30-101)" evidence="3">
    <location>
        <begin position="51"/>
        <end position="122"/>
    </location>
</feature>
<feature type="chain" id="PRO_0000041867" description="CCL9(31-101)" evidence="3">
    <location>
        <begin position="52"/>
        <end position="122"/>
    </location>
</feature>
<feature type="disulfide bond" evidence="1">
    <location>
        <begin position="57"/>
        <end position="80"/>
    </location>
</feature>
<feature type="disulfide bond" evidence="1">
    <location>
        <begin position="58"/>
        <end position="96"/>
    </location>
</feature>
<feature type="disulfide bond" evidence="1">
    <location>
        <begin position="67"/>
        <end position="107"/>
    </location>
</feature>
<feature type="sequence conflict" description="In Ref. 1; AAB02198." evidence="6" ref="1">
    <original>Q</original>
    <variation>K</variation>
    <location>
        <position position="113"/>
    </location>
</feature>
<dbReference type="EMBL" id="U49513">
    <property type="protein sequence ID" value="AAB02198.1"/>
    <property type="molecule type" value="mRNA"/>
</dbReference>
<dbReference type="EMBL" id="U15209">
    <property type="protein sequence ID" value="AAA92583.1"/>
    <property type="molecule type" value="mRNA"/>
</dbReference>
<dbReference type="EMBL" id="U19482">
    <property type="protein sequence ID" value="AAB17120.1"/>
    <property type="molecule type" value="mRNA"/>
</dbReference>
<dbReference type="EMBL" id="AF128195">
    <property type="protein sequence ID" value="AAF22536.1"/>
    <property type="molecule type" value="mRNA"/>
</dbReference>
<dbReference type="EMBL" id="AF128196">
    <property type="protein sequence ID" value="AAF22537.1"/>
    <property type="molecule type" value="mRNA"/>
</dbReference>
<dbReference type="EMBL" id="AF128197">
    <property type="protein sequence ID" value="AAF22538.1"/>
    <property type="molecule type" value="mRNA"/>
</dbReference>
<dbReference type="EMBL" id="AF128198">
    <property type="protein sequence ID" value="AAF22539.1"/>
    <property type="molecule type" value="mRNA"/>
</dbReference>
<dbReference type="EMBL" id="AF128199">
    <property type="protein sequence ID" value="AAF22540.1"/>
    <property type="molecule type" value="mRNA"/>
</dbReference>
<dbReference type="EMBL" id="AF128200">
    <property type="protein sequence ID" value="AAF22541.1"/>
    <property type="molecule type" value="mRNA"/>
</dbReference>
<dbReference type="EMBL" id="AF128201">
    <property type="protein sequence ID" value="AAF22542.1"/>
    <property type="molecule type" value="mRNA"/>
</dbReference>
<dbReference type="EMBL" id="AF128202">
    <property type="protein sequence ID" value="AAF22543.1"/>
    <property type="molecule type" value="mRNA"/>
</dbReference>
<dbReference type="EMBL" id="AF128203">
    <property type="protein sequence ID" value="AAF22544.1"/>
    <property type="molecule type" value="mRNA"/>
</dbReference>
<dbReference type="EMBL" id="AF128204">
    <property type="protein sequence ID" value="AAF22545.1"/>
    <property type="molecule type" value="mRNA"/>
</dbReference>
<dbReference type="EMBL" id="AB051897">
    <property type="protein sequence ID" value="BAB18730.1"/>
    <property type="molecule type" value="Genomic_DNA"/>
</dbReference>
<dbReference type="EMBL" id="AL596122">
    <property type="status" value="NOT_ANNOTATED_CDS"/>
    <property type="molecule type" value="Genomic_DNA"/>
</dbReference>
<dbReference type="CCDS" id="CCDS25170.1"/>
<dbReference type="RefSeq" id="NP_035468.1">
    <property type="nucleotide sequence ID" value="NM_011338.2"/>
</dbReference>
<dbReference type="SMR" id="P51670"/>
<dbReference type="BioGRID" id="203133">
    <property type="interactions" value="1"/>
</dbReference>
<dbReference type="DIP" id="DIP-5921N"/>
<dbReference type="FunCoup" id="P51670">
    <property type="interactions" value="606"/>
</dbReference>
<dbReference type="STRING" id="10090.ENSMUSP00000019266"/>
<dbReference type="iPTMnet" id="P51670"/>
<dbReference type="PhosphoSitePlus" id="P51670"/>
<dbReference type="PaxDb" id="10090-ENSMUSP00000019266"/>
<dbReference type="PeptideAtlas" id="P51670"/>
<dbReference type="ProteomicsDB" id="281249"/>
<dbReference type="DNASU" id="20308"/>
<dbReference type="Ensembl" id="ENSMUST00000019266.6">
    <property type="protein sequence ID" value="ENSMUSP00000019266.6"/>
    <property type="gene ID" value="ENSMUSG00000019122.9"/>
</dbReference>
<dbReference type="GeneID" id="20308"/>
<dbReference type="KEGG" id="mmu:20308"/>
<dbReference type="UCSC" id="uc007kpj.1">
    <property type="organism name" value="mouse"/>
</dbReference>
<dbReference type="AGR" id="MGI:104533"/>
<dbReference type="CTD" id="20308"/>
<dbReference type="MGI" id="MGI:104533">
    <property type="gene designation" value="Ccl9"/>
</dbReference>
<dbReference type="VEuPathDB" id="HostDB:ENSMUSG00000019122"/>
<dbReference type="eggNOG" id="ENOG502TJX7">
    <property type="taxonomic scope" value="Eukaryota"/>
</dbReference>
<dbReference type="GeneTree" id="ENSGT01100000263482"/>
<dbReference type="HOGENOM" id="CLU_141716_4_1_1"/>
<dbReference type="InParanoid" id="P51670"/>
<dbReference type="OMA" id="WAQITHA"/>
<dbReference type="OrthoDB" id="9447832at2759"/>
<dbReference type="PhylomeDB" id="P51670"/>
<dbReference type="TreeFam" id="TF334888"/>
<dbReference type="Reactome" id="R-MMU-416476">
    <property type="pathway name" value="G alpha (q) signalling events"/>
</dbReference>
<dbReference type="Reactome" id="R-MMU-418594">
    <property type="pathway name" value="G alpha (i) signalling events"/>
</dbReference>
<dbReference type="Reactome" id="R-MMU-444473">
    <property type="pathway name" value="Formyl peptide receptors bind formyl peptides and many other ligands"/>
</dbReference>
<dbReference type="BioGRID-ORCS" id="20308">
    <property type="hits" value="1 hit in 79 CRISPR screens"/>
</dbReference>
<dbReference type="PRO" id="PR:P51670"/>
<dbReference type="Proteomes" id="UP000000589">
    <property type="component" value="Chromosome 11"/>
</dbReference>
<dbReference type="RNAct" id="P51670">
    <property type="molecule type" value="protein"/>
</dbReference>
<dbReference type="Bgee" id="ENSMUSG00000019122">
    <property type="expression patterns" value="Expressed in stroma of bone marrow and 142 other cell types or tissues"/>
</dbReference>
<dbReference type="ExpressionAtlas" id="P51670">
    <property type="expression patterns" value="baseline and differential"/>
</dbReference>
<dbReference type="GO" id="GO:0005615">
    <property type="term" value="C:extracellular space"/>
    <property type="evidence" value="ECO:0007669"/>
    <property type="project" value="UniProtKB-KW"/>
</dbReference>
<dbReference type="GO" id="GO:0008009">
    <property type="term" value="F:chemokine activity"/>
    <property type="evidence" value="ECO:0007669"/>
    <property type="project" value="InterPro"/>
</dbReference>
<dbReference type="GO" id="GO:0006955">
    <property type="term" value="P:immune response"/>
    <property type="evidence" value="ECO:0007669"/>
    <property type="project" value="InterPro"/>
</dbReference>
<dbReference type="GO" id="GO:0045662">
    <property type="term" value="P:negative regulation of myoblast differentiation"/>
    <property type="evidence" value="ECO:0000315"/>
    <property type="project" value="MGI"/>
</dbReference>
<dbReference type="CDD" id="cd00272">
    <property type="entry name" value="Chemokine_CC"/>
    <property type="match status" value="1"/>
</dbReference>
<dbReference type="FunFam" id="2.40.50.40:FF:000002">
    <property type="entry name" value="C-C motif chemokine"/>
    <property type="match status" value="1"/>
</dbReference>
<dbReference type="Gene3D" id="2.40.50.40">
    <property type="match status" value="1"/>
</dbReference>
<dbReference type="InterPro" id="IPR039809">
    <property type="entry name" value="Chemokine_b/g/d"/>
</dbReference>
<dbReference type="InterPro" id="IPR000827">
    <property type="entry name" value="Chemokine_CC_CS"/>
</dbReference>
<dbReference type="InterPro" id="IPR001811">
    <property type="entry name" value="Chemokine_IL8-like_dom"/>
</dbReference>
<dbReference type="InterPro" id="IPR036048">
    <property type="entry name" value="Interleukin_8-like_sf"/>
</dbReference>
<dbReference type="PANTHER" id="PTHR12015:SF77">
    <property type="entry name" value="C-C MOTIF CHEMOKINE 15"/>
    <property type="match status" value="1"/>
</dbReference>
<dbReference type="PANTHER" id="PTHR12015">
    <property type="entry name" value="SMALL INDUCIBLE CYTOKINE A"/>
    <property type="match status" value="1"/>
</dbReference>
<dbReference type="Pfam" id="PF00048">
    <property type="entry name" value="IL8"/>
    <property type="match status" value="1"/>
</dbReference>
<dbReference type="SMART" id="SM00199">
    <property type="entry name" value="SCY"/>
    <property type="match status" value="1"/>
</dbReference>
<dbReference type="SUPFAM" id="SSF54117">
    <property type="entry name" value="Interleukin 8-like chemokines"/>
    <property type="match status" value="1"/>
</dbReference>
<dbReference type="PROSITE" id="PS00472">
    <property type="entry name" value="SMALL_CYTOKINES_CC"/>
    <property type="match status" value="1"/>
</dbReference>
<sequence length="122" mass="13871">MKPFHTALSFLILTTALGIWAQITHATETKEVQSSLKAQQGLEIEMFHMGFQDSSDCCLSYNSRIQCSRFIGYFPTSGGCTRPGIIFISKRGFQVCANPSDRRVQRCIERLEQNSQPRTYKQ</sequence>
<evidence type="ECO:0000250" key="1"/>
<evidence type="ECO:0000255" key="2"/>
<evidence type="ECO:0000269" key="3">
    <source>
    </source>
</evidence>
<evidence type="ECO:0000303" key="4">
    <source>
    </source>
</evidence>
<evidence type="ECO:0000303" key="5">
    <source>
    </source>
</evidence>
<evidence type="ECO:0000305" key="6"/>
<name>CCL9_MOUSE</name>
<reference key="1">
    <citation type="journal article" date="1995" name="J. Inflamm.">
        <title>MIP-1 gamma: molecular cloning, expression, and biological activities of a novel CC chemokine that is constitutively secreted in vivo.</title>
        <authorList>
            <person name="Poltorak A.N."/>
            <person name="Bazzoni F."/>
            <person name="Smirnova I.I."/>
            <person name="Alejos E."/>
            <person name="Thompson P."/>
            <person name="Luheshi G."/>
            <person name="Rothwell N."/>
            <person name="Beutler B."/>
        </authorList>
    </citation>
    <scope>NUCLEOTIDE SEQUENCE [MRNA]</scope>
</reference>
<reference key="2">
    <citation type="journal article" date="1995" name="J. Immunol.">
        <title>A novel chemokine, macrophage inflammatory protein-related protein-2, inhibits colony formation of bone marrow myeloid progenitors.</title>
        <authorList>
            <person name="Youn B.-S."/>
            <person name="Jang I.-K."/>
            <person name="Broxmeyer H.E."/>
            <person name="Cooper S."/>
            <person name="Jenkins N.A."/>
            <person name="Gilbert D.J."/>
            <person name="Copeland N.G."/>
            <person name="Elick T.A."/>
            <person name="Fraser M.J. Jr."/>
            <person name="Kwon B.S."/>
        </authorList>
    </citation>
    <scope>NUCLEOTIDE SEQUENCE [MRNA]</scope>
</reference>
<reference key="3">
    <citation type="journal article" date="1995" name="J. Immunol.">
        <title>Molecular cloning and functional characterization of a novel member of the C-C chemokine family.</title>
        <authorList>
            <person name="Hara T."/>
            <person name="Bacon K.B."/>
            <person name="Cho L.C."/>
            <person name="Yoshimura A."/>
            <person name="Morikawa Y."/>
            <person name="Copeland N.G."/>
            <person name="Gilbert D.J."/>
            <person name="Jenkins N.A."/>
            <person name="Schall T.J."/>
            <person name="Miyajima A."/>
        </authorList>
    </citation>
    <scope>NUCLEOTIDE SEQUENCE [MRNA]</scope>
</reference>
<reference key="4">
    <citation type="journal article" date="1999" name="J. Immunol.">
        <title>Sequence polymorphisms in the chemokines Scya1 (TCA-3), Scya2 (monocyte chemoattractant protein (MCP)-1), and Scya12 (MCP-5) are candidates for eae7, a locus controlling susceptibility to monophasic remitting/nonrelapsing experimental allergic encephalomyelitis.</title>
        <authorList>
            <person name="Teuscher C."/>
            <person name="Butterfield R.J."/>
            <person name="Ma R.Z."/>
            <person name="Zachary J.F."/>
            <person name="Doerge R.W."/>
            <person name="Blankenhorn E.P."/>
        </authorList>
    </citation>
    <scope>NUCLEOTIDE SEQUENCE [MRNA]</scope>
    <source>
        <strain>B10.S/J</strain>
        <strain>BALB/cJ</strain>
        <strain>DBA/2J</strain>
        <strain>NOD/LtJ</strain>
        <strain>SJL/J</strain>
        <tissue>Spleen</tissue>
    </source>
</reference>
<reference key="5">
    <citation type="submission" date="2000-11" db="EMBL/GenBank/DDBJ databases">
        <title>Organization of the mouse CC chemokine cluster containing the genes for C10, MRP-2 and RANTES.</title>
        <authorList>
            <person name="Nomiyama H."/>
        </authorList>
    </citation>
    <scope>NUCLEOTIDE SEQUENCE [GENOMIC DNA]</scope>
    <source>
        <strain>129/Sv</strain>
    </source>
</reference>
<reference key="6">
    <citation type="journal article" date="2009" name="PLoS Biol.">
        <title>Lineage-specific biology revealed by a finished genome assembly of the mouse.</title>
        <authorList>
            <person name="Church D.M."/>
            <person name="Goodstadt L."/>
            <person name="Hillier L.W."/>
            <person name="Zody M.C."/>
            <person name="Goldstein S."/>
            <person name="She X."/>
            <person name="Bult C.J."/>
            <person name="Agarwala R."/>
            <person name="Cherry J.L."/>
            <person name="DiCuccio M."/>
            <person name="Hlavina W."/>
            <person name="Kapustin Y."/>
            <person name="Meric P."/>
            <person name="Maglott D."/>
            <person name="Birtle Z."/>
            <person name="Marques A.C."/>
            <person name="Graves T."/>
            <person name="Zhou S."/>
            <person name="Teague B."/>
            <person name="Potamousis K."/>
            <person name="Churas C."/>
            <person name="Place M."/>
            <person name="Herschleb J."/>
            <person name="Runnheim R."/>
            <person name="Forrest D."/>
            <person name="Amos-Landgraf J."/>
            <person name="Schwartz D.C."/>
            <person name="Cheng Z."/>
            <person name="Lindblad-Toh K."/>
            <person name="Eichler E.E."/>
            <person name="Ponting C.P."/>
        </authorList>
    </citation>
    <scope>NUCLEOTIDE SEQUENCE [LARGE SCALE GENOMIC DNA]</scope>
    <source>
        <strain>C57BL/6J</strain>
    </source>
</reference>
<reference key="7">
    <citation type="journal article" date="2005" name="J. Immunol.">
        <title>Proteolytic activation of alternative CCR1 ligands in inflammation.</title>
        <authorList>
            <person name="Berahovich R.D."/>
            <person name="Miao Z."/>
            <person name="Wang Y."/>
            <person name="Premack B."/>
            <person name="Howard M.C."/>
            <person name="Schall T.J."/>
        </authorList>
    </citation>
    <scope>IDENTIFICATION OF CCL9(29-101); CCL9(30-101) AND CCL9(31-101)</scope>
    <scope>PROTEOLYTIC PROCESSING OF N-TERMINUS</scope>
</reference>
<keyword id="KW-0145">Chemotaxis</keyword>
<keyword id="KW-0202">Cytokine</keyword>
<keyword id="KW-1015">Disulfide bond</keyword>
<keyword id="KW-1185">Reference proteome</keyword>
<keyword id="KW-0964">Secreted</keyword>
<keyword id="KW-0732">Signal</keyword>
<organism>
    <name type="scientific">Mus musculus</name>
    <name type="common">Mouse</name>
    <dbReference type="NCBI Taxonomy" id="10090"/>
    <lineage>
        <taxon>Eukaryota</taxon>
        <taxon>Metazoa</taxon>
        <taxon>Chordata</taxon>
        <taxon>Craniata</taxon>
        <taxon>Vertebrata</taxon>
        <taxon>Euteleostomi</taxon>
        <taxon>Mammalia</taxon>
        <taxon>Eutheria</taxon>
        <taxon>Euarchontoglires</taxon>
        <taxon>Glires</taxon>
        <taxon>Rodentia</taxon>
        <taxon>Myomorpha</taxon>
        <taxon>Muroidea</taxon>
        <taxon>Muridae</taxon>
        <taxon>Murinae</taxon>
        <taxon>Mus</taxon>
        <taxon>Mus</taxon>
    </lineage>
</organism>
<proteinExistence type="evidence at protein level"/>
<accession>P51670</accession>
<accession>Q5QNW2</accession>